<keyword id="KW-0131">Cell cycle</keyword>
<keyword id="KW-0132">Cell division</keyword>
<keyword id="KW-0137">Centromere</keyword>
<keyword id="KW-0158">Chromosome</keyword>
<keyword id="KW-0175">Coiled coil</keyword>
<keyword id="KW-0238">DNA-binding</keyword>
<keyword id="KW-0469">Meiosis</keyword>
<keyword id="KW-0539">Nucleus</keyword>
<keyword id="KW-0597">Phosphoprotein</keyword>
<keyword id="KW-1185">Reference proteome</keyword>
<organism>
    <name type="scientific">Rattus norvegicus</name>
    <name type="common">Rat</name>
    <dbReference type="NCBI Taxonomy" id="10116"/>
    <lineage>
        <taxon>Eukaryota</taxon>
        <taxon>Metazoa</taxon>
        <taxon>Chordata</taxon>
        <taxon>Craniata</taxon>
        <taxon>Vertebrata</taxon>
        <taxon>Euteleostomi</taxon>
        <taxon>Mammalia</taxon>
        <taxon>Eutheria</taxon>
        <taxon>Euarchontoglires</taxon>
        <taxon>Glires</taxon>
        <taxon>Rodentia</taxon>
        <taxon>Myomorpha</taxon>
        <taxon>Muroidea</taxon>
        <taxon>Muridae</taxon>
        <taxon>Murinae</taxon>
        <taxon>Rattus</taxon>
    </lineage>
</organism>
<reference key="1">
    <citation type="journal article" date="1994" name="Mol. Cell. Biol.">
        <title>The gene encoding a major component of the lateral elements of synaptonemal complexes of the rat is related to X-linked lymphocyte-regulated genes.</title>
        <authorList>
            <person name="Lammers J.H.M."/>
            <person name="Offenberg H.H."/>
            <person name="van Aalderen M."/>
            <person name="Vink A.C.G."/>
            <person name="Dietrich A.J.J."/>
            <person name="Heyting C."/>
        </authorList>
    </citation>
    <scope>NUCLEOTIDE SEQUENCE [MRNA]</scope>
    <scope>FUNCTION</scope>
    <scope>SUBUNIT</scope>
    <scope>SUBCELLULAR LOCATION</scope>
    <scope>TISSUE SPECIFICITY</scope>
    <source>
        <strain>Wistar</strain>
    </source>
</reference>
<reference key="2">
    <citation type="journal article" date="1998" name="Chromosoma">
        <title>Localization of SCP2 and SCP3 protein molecules within synaptonemal complexes of the rat.</title>
        <authorList>
            <person name="Schalk J.A.C."/>
            <person name="Dietrich A.J.J."/>
            <person name="Vink A.C.G."/>
            <person name="Offenberg H.H."/>
            <person name="van Aalderen M."/>
            <person name="Heyting C."/>
        </authorList>
    </citation>
    <scope>FUNCTION</scope>
    <scope>SUBCELLULAR LOCATION</scope>
    <scope>SUBUNIT</scope>
</reference>
<reference key="3">
    <citation type="journal article" date="1998" name="J. Cell Biol.">
        <title>The synaptonemal complex protein SCP3 can form multistranded, cross-striated fibers in vivo.</title>
        <authorList>
            <person name="Yuan L."/>
            <person name="Pelttari J."/>
            <person name="Brundell E."/>
            <person name="Bjoerkroth B."/>
            <person name="Zhao J."/>
            <person name="Liu J.G."/>
            <person name="Brismar H."/>
            <person name="Daneholt B."/>
            <person name="Hoeoeg C."/>
        </authorList>
    </citation>
    <scope>SUBUNIT</scope>
    <scope>SUBCELLULAR LOCATION</scope>
</reference>
<reference key="4">
    <citation type="journal article" date="2000" name="J. Cell Sci.">
        <title>Association of mammalian SMC1 and SMC3 proteins with meiotic chromosomes and synaptonemal complexes.</title>
        <authorList>
            <person name="Eijpe M."/>
            <person name="Heyting C."/>
            <person name="Gross B."/>
            <person name="Jessberger R."/>
        </authorList>
    </citation>
    <scope>INTERACTION WITH SYCP2</scope>
</reference>
<reference key="5">
    <citation type="journal article" date="2007" name="Sex. Dev.">
        <title>Synaptonemal complex protein SYCP3 of the rat: evolutionarily conserved domains and the assembly of higher order structures.</title>
        <authorList>
            <person name="Baier A."/>
            <person name="Alsheimer M."/>
            <person name="Volff J.N."/>
            <person name="Benavente R."/>
        </authorList>
    </citation>
    <scope>SUBCELLULAR LOCATION</scope>
    <scope>SUBUNIT</scope>
</reference>
<reference key="6">
    <citation type="journal article" date="2012" name="Nat. Commun.">
        <title>Quantitative maps of protein phosphorylation sites across 14 different rat organs and tissues.</title>
        <authorList>
            <person name="Lundby A."/>
            <person name="Secher A."/>
            <person name="Lage K."/>
            <person name="Nordsborg N.B."/>
            <person name="Dmytriyev A."/>
            <person name="Lundby C."/>
            <person name="Olsen J.V."/>
        </authorList>
    </citation>
    <scope>PHOSPHORYLATION [LARGE SCALE ANALYSIS] AT SER-14; SER-58; SER-60 AND SER-80</scope>
    <scope>IDENTIFICATION BY MASS SPECTROMETRY [LARGE SCALE ANALYSIS]</scope>
</reference>
<comment type="function">
    <text evidence="1 8 10">Component of the synaptonemal complexes (SCS), formed between homologous chromosomes during meiotic prophase (PubMed:8289794, PubMed:9933407). Required for centromere pairing during meiosis in male germ cells. Required for normal meiosis during spermatogenesis and male fertility. Plays a lesser role in female fertility. Required for efficient phosphorylation of HORMAD1 and HORMAD2.</text>
</comment>
<comment type="subunit">
    <text evidence="1 3 6 8 9 10">Component of the lateral elements of synaptonemal complexes (PubMed:8289794, PubMed:9933407). Homotetramer; the tetrameric helix bundles assemble end to end into long homopolimeric fibers (in vitro) (By similarity). Homooligomer that assembles into fibers; the fibers exhibit a transversal striation with a periodicity of about 20 nm (in vitro) (PubMed:18391527, PubMed:9679134). Interacts with SYCP2 (PubMed:10652260). Forms a complex with EWSR1, PRDM9, REC8 and SYCP1; complex formation is dependent of phosphorylated form of REC8 and requires PRDM9 bound to hotspot DNA; EWSR1 joins PRDM9 with the chromosomal axis through REC8 (By similarity).</text>
</comment>
<comment type="subcellular location">
    <subcellularLocation>
        <location evidence="7 9">Nucleus</location>
    </subcellularLocation>
    <subcellularLocation>
        <location evidence="8 10">Chromosome</location>
    </subcellularLocation>
    <subcellularLocation>
        <location evidence="2">Chromosome</location>
        <location evidence="2">Centromere</location>
    </subcellularLocation>
    <text evidence="2">It is present in early unpaired cores, in the lateral domains of the synaptonemal complex and in the chromosome cores when they separate at diplotene. It is found axial to the metaphase I chromosomes and in association with pairs of sister centromeres. The centromere-associated protein becomes dissociated from the centromeres at anaphase II and is not found in mitotic metaphase centromeres.</text>
</comment>
<comment type="tissue specificity">
    <text evidence="8">Detected in spermatocytes and testis (at protein level) (PubMed:8289794, PubMed:9933407). Testis-specific (PubMed:8289794).</text>
</comment>
<comment type="domain">
    <text evidence="3">Composed of a long central coiled coil domain. The N-terminal and C-terminal regions interact with DNA.</text>
</comment>
<comment type="PTM">
    <text evidence="1">Phosphorylated.</text>
</comment>
<comment type="similarity">
    <text evidence="12">Belongs to the XLR/SYCP3 family.</text>
</comment>
<feature type="chain" id="PRO_0000223045" description="Synaptonemal complex protein 3">
    <location>
        <begin position="1"/>
        <end position="257"/>
    </location>
</feature>
<feature type="region of interest" description="Disordered" evidence="5">
    <location>
        <begin position="23"/>
        <end position="66"/>
    </location>
</feature>
<feature type="region of interest" description="Interaction with DNA" evidence="3">
    <location>
        <begin position="74"/>
        <end position="79"/>
    </location>
</feature>
<feature type="region of interest" description="Important for oligomerization and fiber formation" evidence="3">
    <location>
        <begin position="90"/>
        <end position="95"/>
    </location>
</feature>
<feature type="region of interest" description="Interaction with DNA" evidence="3">
    <location>
        <begin position="109"/>
        <end position="112"/>
    </location>
</feature>
<feature type="region of interest" description="Important for oligomerization and fiber formation" evidence="3">
    <location>
        <begin position="252"/>
        <end position="257"/>
    </location>
</feature>
<feature type="coiled-coil region" evidence="3 4">
    <location>
        <begin position="87"/>
        <end position="244"/>
    </location>
</feature>
<feature type="short sequence motif" description="Nuclear localization signal" evidence="4">
    <location>
        <begin position="109"/>
        <end position="112"/>
    </location>
</feature>
<feature type="compositionally biased region" description="Basic residues" evidence="5">
    <location>
        <begin position="23"/>
        <end position="34"/>
    </location>
</feature>
<feature type="compositionally biased region" description="Basic and acidic residues" evidence="5">
    <location>
        <begin position="43"/>
        <end position="58"/>
    </location>
</feature>
<feature type="modified residue" description="Phosphoserine" evidence="13">
    <location>
        <position position="14"/>
    </location>
</feature>
<feature type="modified residue" description="Phosphoserine" evidence="13">
    <location>
        <position position="58"/>
    </location>
</feature>
<feature type="modified residue" description="Phosphoserine" evidence="13">
    <location>
        <position position="60"/>
    </location>
</feature>
<feature type="modified residue" description="Phosphoserine" evidence="13">
    <location>
        <position position="80"/>
    </location>
</feature>
<feature type="modified residue" description="Phosphothreonine" evidence="1">
    <location>
        <position position="221"/>
    </location>
</feature>
<accession>Q63520</accession>
<dbReference type="EMBL" id="X75785">
    <property type="protein sequence ID" value="CAA53430.1"/>
    <property type="molecule type" value="mRNA"/>
</dbReference>
<dbReference type="PIR" id="A55925">
    <property type="entry name" value="A55925"/>
</dbReference>
<dbReference type="RefSeq" id="NP_037173.1">
    <property type="nucleotide sequence ID" value="NM_013041.2"/>
</dbReference>
<dbReference type="SMR" id="Q63520"/>
<dbReference type="FunCoup" id="Q63520">
    <property type="interactions" value="18"/>
</dbReference>
<dbReference type="STRING" id="10116.ENSRNOP00000007088"/>
<dbReference type="iPTMnet" id="Q63520"/>
<dbReference type="PhosphoSitePlus" id="Q63520"/>
<dbReference type="PaxDb" id="10116-ENSRNOP00000007088"/>
<dbReference type="Ensembl" id="ENSRNOT00000007088.7">
    <property type="protein sequence ID" value="ENSRNOP00000007088.5"/>
    <property type="gene ID" value="ENSRNOG00000005270.7"/>
</dbReference>
<dbReference type="GeneID" id="25561"/>
<dbReference type="KEGG" id="rno:25561"/>
<dbReference type="AGR" id="RGD:3795"/>
<dbReference type="CTD" id="50511"/>
<dbReference type="RGD" id="3795">
    <property type="gene designation" value="Sycp3"/>
</dbReference>
<dbReference type="eggNOG" id="ENOG502R883">
    <property type="taxonomic scope" value="Eukaryota"/>
</dbReference>
<dbReference type="GeneTree" id="ENSGT00390000000062"/>
<dbReference type="HOGENOM" id="CLU_101820_2_0_1"/>
<dbReference type="InParanoid" id="Q63520"/>
<dbReference type="PhylomeDB" id="Q63520"/>
<dbReference type="PRO" id="PR:Q63520"/>
<dbReference type="Proteomes" id="UP000002494">
    <property type="component" value="Chromosome 7"/>
</dbReference>
<dbReference type="Bgee" id="ENSRNOG00000005270">
    <property type="expression patterns" value="Expressed in testis and 17 other cell types or tissues"/>
</dbReference>
<dbReference type="GO" id="GO:0005694">
    <property type="term" value="C:chromosome"/>
    <property type="evidence" value="ECO:0000266"/>
    <property type="project" value="RGD"/>
</dbReference>
<dbReference type="GO" id="GO:0000775">
    <property type="term" value="C:chromosome, centromeric region"/>
    <property type="evidence" value="ECO:0000250"/>
    <property type="project" value="UniProtKB"/>
</dbReference>
<dbReference type="GO" id="GO:0000793">
    <property type="term" value="C:condensed chromosome"/>
    <property type="evidence" value="ECO:0000266"/>
    <property type="project" value="RGD"/>
</dbReference>
<dbReference type="GO" id="GO:0000779">
    <property type="term" value="C:condensed chromosome, centromeric region"/>
    <property type="evidence" value="ECO:0000266"/>
    <property type="project" value="RGD"/>
</dbReference>
<dbReference type="GO" id="GO:0000794">
    <property type="term" value="C:condensed nuclear chromosome"/>
    <property type="evidence" value="ECO:0000266"/>
    <property type="project" value="RGD"/>
</dbReference>
<dbReference type="GO" id="GO:0001674">
    <property type="term" value="C:female germ cell nucleus"/>
    <property type="evidence" value="ECO:0000266"/>
    <property type="project" value="RGD"/>
</dbReference>
<dbReference type="GO" id="GO:0000800">
    <property type="term" value="C:lateral element"/>
    <property type="evidence" value="ECO:0000314"/>
    <property type="project" value="UniProtKB"/>
</dbReference>
<dbReference type="GO" id="GO:0001673">
    <property type="term" value="C:male germ cell nucleus"/>
    <property type="evidence" value="ECO:0000266"/>
    <property type="project" value="RGD"/>
</dbReference>
<dbReference type="GO" id="GO:0005634">
    <property type="term" value="C:nucleus"/>
    <property type="evidence" value="ECO:0000266"/>
    <property type="project" value="RGD"/>
</dbReference>
<dbReference type="GO" id="GO:0000795">
    <property type="term" value="C:synaptonemal complex"/>
    <property type="evidence" value="ECO:0000266"/>
    <property type="project" value="RGD"/>
</dbReference>
<dbReference type="GO" id="GO:0000802">
    <property type="term" value="C:transverse filament"/>
    <property type="evidence" value="ECO:0000266"/>
    <property type="project" value="RGD"/>
</dbReference>
<dbReference type="GO" id="GO:0003677">
    <property type="term" value="F:DNA binding"/>
    <property type="evidence" value="ECO:0007669"/>
    <property type="project" value="UniProtKB-KW"/>
</dbReference>
<dbReference type="GO" id="GO:0051301">
    <property type="term" value="P:cell division"/>
    <property type="evidence" value="ECO:0007669"/>
    <property type="project" value="UniProtKB-KW"/>
</dbReference>
<dbReference type="GO" id="GO:1990830">
    <property type="term" value="P:cellular response to leukemia inhibitory factor"/>
    <property type="evidence" value="ECO:0000266"/>
    <property type="project" value="RGD"/>
</dbReference>
<dbReference type="GO" id="GO:0051026">
    <property type="term" value="P:chiasma assembly"/>
    <property type="evidence" value="ECO:0000266"/>
    <property type="project" value="RGD"/>
</dbReference>
<dbReference type="GO" id="GO:0016321">
    <property type="term" value="P:female meiosis chromosome segregation"/>
    <property type="evidence" value="ECO:0000266"/>
    <property type="project" value="RGD"/>
</dbReference>
<dbReference type="GO" id="GO:0007066">
    <property type="term" value="P:female meiosis sister chromatid cohesion"/>
    <property type="evidence" value="ECO:0000266"/>
    <property type="project" value="RGD"/>
</dbReference>
<dbReference type="GO" id="GO:0007129">
    <property type="term" value="P:homologous chromosome pairing at meiosis"/>
    <property type="evidence" value="ECO:0000266"/>
    <property type="project" value="RGD"/>
</dbReference>
<dbReference type="GO" id="GO:0051878">
    <property type="term" value="P:lateral element assembly"/>
    <property type="evidence" value="ECO:0000266"/>
    <property type="project" value="RGD"/>
</dbReference>
<dbReference type="GO" id="GO:0051321">
    <property type="term" value="P:meiotic cell cycle"/>
    <property type="evidence" value="ECO:0000266"/>
    <property type="project" value="RGD"/>
</dbReference>
<dbReference type="GO" id="GO:0000711">
    <property type="term" value="P:meiotic DNA repair synthesis"/>
    <property type="evidence" value="ECO:0000266"/>
    <property type="project" value="RGD"/>
</dbReference>
<dbReference type="GO" id="GO:0000278">
    <property type="term" value="P:mitotic cell cycle"/>
    <property type="evidence" value="ECO:0000266"/>
    <property type="project" value="RGD"/>
</dbReference>
<dbReference type="GO" id="GO:0035092">
    <property type="term" value="P:sperm DNA condensation"/>
    <property type="evidence" value="ECO:0000266"/>
    <property type="project" value="RGD"/>
</dbReference>
<dbReference type="GO" id="GO:0007286">
    <property type="term" value="P:spermatid development"/>
    <property type="evidence" value="ECO:0000318"/>
    <property type="project" value="GO_Central"/>
</dbReference>
<dbReference type="GO" id="GO:0007283">
    <property type="term" value="P:spermatogenesis"/>
    <property type="evidence" value="ECO:0000266"/>
    <property type="project" value="RGD"/>
</dbReference>
<dbReference type="GO" id="GO:0007130">
    <property type="term" value="P:synaptonemal complex assembly"/>
    <property type="evidence" value="ECO:0000266"/>
    <property type="project" value="RGD"/>
</dbReference>
<dbReference type="InterPro" id="IPR051443">
    <property type="entry name" value="XLR/SYCP3"/>
</dbReference>
<dbReference type="InterPro" id="IPR006888">
    <property type="entry name" value="XLR/SYCP3/FAM9_dom"/>
</dbReference>
<dbReference type="PANTHER" id="PTHR19368:SF19">
    <property type="entry name" value="SYNAPTONEMAL COMPLEX PROTEIN 3"/>
    <property type="match status" value="1"/>
</dbReference>
<dbReference type="PANTHER" id="PTHR19368">
    <property type="entry name" value="XLR/SCP3/FAM9"/>
    <property type="match status" value="1"/>
</dbReference>
<dbReference type="Pfam" id="PF04803">
    <property type="entry name" value="Cor1"/>
    <property type="match status" value="1"/>
</dbReference>
<name>SYCP3_RAT</name>
<evidence type="ECO:0000250" key="1">
    <source>
        <dbReference type="UniProtKB" id="P70281"/>
    </source>
</evidence>
<evidence type="ECO:0000250" key="2">
    <source>
        <dbReference type="UniProtKB" id="Q60547"/>
    </source>
</evidence>
<evidence type="ECO:0000250" key="3">
    <source>
        <dbReference type="UniProtKB" id="Q8IZU3"/>
    </source>
</evidence>
<evidence type="ECO:0000255" key="4"/>
<evidence type="ECO:0000256" key="5">
    <source>
        <dbReference type="SAM" id="MobiDB-lite"/>
    </source>
</evidence>
<evidence type="ECO:0000269" key="6">
    <source>
    </source>
</evidence>
<evidence type="ECO:0000269" key="7">
    <source>
    </source>
</evidence>
<evidence type="ECO:0000269" key="8">
    <source>
    </source>
</evidence>
<evidence type="ECO:0000269" key="9">
    <source>
    </source>
</evidence>
<evidence type="ECO:0000269" key="10">
    <source>
    </source>
</evidence>
<evidence type="ECO:0000303" key="11">
    <source>
    </source>
</evidence>
<evidence type="ECO:0000305" key="12"/>
<evidence type="ECO:0007744" key="13">
    <source>
    </source>
</evidence>
<sequence length="257" mass="29733">MLRGCGEVGAVDCSPEQLNKHLKMVPGGRKHSGKSGKPPLIDQPKKAFDFEKEDKDLSGSEEDAVDEKTQVFDKHGKKRSAGIIEDVGGEVQNMLEKFGADINKALLAKKKRIEMYTKASFKASNQKIEQIWKTQQEEIQKLNNEYSQQFLSVLQQWELDMQKFEEQGEKLTNLFRQQQKIFQQTRIVQSQRMKAIKQLHEQFIKSLEDVEKNNDNLFTGTQSELKKEMAMLQKKVMMETQQQEMANVRKSLQSMLF</sequence>
<gene>
    <name type="primary">Sycp3</name>
    <name evidence="11" type="synonym">Scp3</name>
</gene>
<protein>
    <recommendedName>
        <fullName>Synaptonemal complex protein 3</fullName>
        <shortName>SCP-3</shortName>
    </recommendedName>
</protein>
<proteinExistence type="evidence at protein level"/>